<name>MTNA_SORMK</name>
<feature type="chain" id="PRO_0000402054" description="Methylthioribose-1-phosphate isomerase">
    <location>
        <begin position="1"/>
        <end position="388"/>
    </location>
</feature>
<feature type="active site" description="Proton donor" evidence="1">
    <location>
        <position position="258"/>
    </location>
</feature>
<feature type="site" description="Transition state stabilizer" evidence="1">
    <location>
        <position position="174"/>
    </location>
</feature>
<comment type="function">
    <text evidence="1">Catalyzes the interconversion of methylthioribose-1-phosphate (MTR-1-P) into methylthioribulose-1-phosphate (MTRu-1-P).</text>
</comment>
<comment type="catalytic activity">
    <reaction evidence="1">
        <text>5-(methylsulfanyl)-alpha-D-ribose 1-phosphate = 5-(methylsulfanyl)-D-ribulose 1-phosphate</text>
        <dbReference type="Rhea" id="RHEA:19989"/>
        <dbReference type="ChEBI" id="CHEBI:58533"/>
        <dbReference type="ChEBI" id="CHEBI:58548"/>
        <dbReference type="EC" id="5.3.1.23"/>
    </reaction>
</comment>
<comment type="pathway">
    <text evidence="1">Amino-acid biosynthesis; L-methionine biosynthesis via salvage pathway; L-methionine from S-methyl-5-thio-alpha-D-ribose 1-phosphate: step 1/6.</text>
</comment>
<comment type="subcellular location">
    <subcellularLocation>
        <location evidence="1">Cytoplasm</location>
    </subcellularLocation>
    <subcellularLocation>
        <location evidence="1">Nucleus</location>
    </subcellularLocation>
</comment>
<comment type="similarity">
    <text evidence="1">Belongs to the eIF-2B alpha/beta/delta subunits family. MtnA subfamily.</text>
</comment>
<comment type="sequence caution" evidence="2">
    <conflict type="erroneous gene model prediction">
        <sequence resource="EMBL-CDS" id="CCC09634"/>
    </conflict>
    <text>The predicted gene SMAC_03666 has been split into 2 genes: SMAC_03666.1 and SMAC_03666.2.</text>
</comment>
<proteinExistence type="inferred from homology"/>
<organism>
    <name type="scientific">Sordaria macrospora (strain ATCC MYA-333 / DSM 997 / K(L3346) / K-hell)</name>
    <dbReference type="NCBI Taxonomy" id="771870"/>
    <lineage>
        <taxon>Eukaryota</taxon>
        <taxon>Fungi</taxon>
        <taxon>Dikarya</taxon>
        <taxon>Ascomycota</taxon>
        <taxon>Pezizomycotina</taxon>
        <taxon>Sordariomycetes</taxon>
        <taxon>Sordariomycetidae</taxon>
        <taxon>Sordariales</taxon>
        <taxon>Sordariaceae</taxon>
        <taxon>Sordaria</taxon>
    </lineage>
</organism>
<evidence type="ECO:0000255" key="1">
    <source>
        <dbReference type="HAMAP-Rule" id="MF_03119"/>
    </source>
</evidence>
<evidence type="ECO:0000305" key="2"/>
<reference key="1">
    <citation type="journal article" date="2010" name="PLoS Genet.">
        <title>De novo assembly of a 40 Mb eukaryotic genome from short sequence reads: Sordaria macrospora, a model organism for fungal morphogenesis.</title>
        <authorList>
            <person name="Nowrousian M."/>
            <person name="Stajich J.E."/>
            <person name="Chu M."/>
            <person name="Engh I."/>
            <person name="Espagne E."/>
            <person name="Halliday K."/>
            <person name="Kamerewerd J."/>
            <person name="Kempken F."/>
            <person name="Knab B."/>
            <person name="Kuo H.-C."/>
            <person name="Osiewacz H.D."/>
            <person name="Poeggeler S."/>
            <person name="Read N.D."/>
            <person name="Seiler S."/>
            <person name="Smith K.M."/>
            <person name="Zickler D."/>
            <person name="Kueck U."/>
            <person name="Freitag M."/>
        </authorList>
    </citation>
    <scope>NUCLEOTIDE SEQUENCE [LARGE SCALE GENOMIC DNA]</scope>
    <source>
        <strain>ATCC MYA-333 / DSM 997 / K(L3346) / K-hell</strain>
    </source>
</reference>
<dbReference type="EC" id="5.3.1.23" evidence="1"/>
<dbReference type="EMBL" id="CABT02000009">
    <property type="protein sequence ID" value="CCC09634.1"/>
    <property type="status" value="ALT_SEQ"/>
    <property type="molecule type" value="Genomic_DNA"/>
</dbReference>
<dbReference type="SMR" id="P0CI29"/>
<dbReference type="FunCoup" id="P0CI29">
    <property type="interactions" value="686"/>
</dbReference>
<dbReference type="STRING" id="771870.P0CI29"/>
<dbReference type="VEuPathDB" id="FungiDB:SMAC_03666"/>
<dbReference type="HOGENOM" id="CLU_339236_0_0_1"/>
<dbReference type="InParanoid" id="P0CI29"/>
<dbReference type="UniPathway" id="UPA00904">
    <property type="reaction ID" value="UER00874"/>
</dbReference>
<dbReference type="Proteomes" id="UP000001881">
    <property type="component" value="Unassembled WGS sequence"/>
</dbReference>
<dbReference type="GO" id="GO:0005737">
    <property type="term" value="C:cytoplasm"/>
    <property type="evidence" value="ECO:0007669"/>
    <property type="project" value="UniProtKB-SubCell"/>
</dbReference>
<dbReference type="GO" id="GO:0005634">
    <property type="term" value="C:nucleus"/>
    <property type="evidence" value="ECO:0007669"/>
    <property type="project" value="UniProtKB-SubCell"/>
</dbReference>
<dbReference type="GO" id="GO:0046523">
    <property type="term" value="F:S-methyl-5-thioribose-1-phosphate isomerase activity"/>
    <property type="evidence" value="ECO:0007669"/>
    <property type="project" value="UniProtKB-UniRule"/>
</dbReference>
<dbReference type="GO" id="GO:0019509">
    <property type="term" value="P:L-methionine salvage from methylthioadenosine"/>
    <property type="evidence" value="ECO:0007669"/>
    <property type="project" value="UniProtKB-UniRule"/>
</dbReference>
<dbReference type="FunFam" id="1.20.120.420:FF:000003">
    <property type="entry name" value="Methylthioribose-1-phosphate isomerase"/>
    <property type="match status" value="1"/>
</dbReference>
<dbReference type="FunFam" id="3.40.50.10470:FF:000010">
    <property type="entry name" value="Methylthioribose-1-phosphate isomerase"/>
    <property type="match status" value="1"/>
</dbReference>
<dbReference type="Gene3D" id="1.20.120.420">
    <property type="entry name" value="translation initiation factor eif-2b, domain 1"/>
    <property type="match status" value="1"/>
</dbReference>
<dbReference type="Gene3D" id="3.40.50.10470">
    <property type="entry name" value="Translation initiation factor eif-2b, domain 2"/>
    <property type="match status" value="1"/>
</dbReference>
<dbReference type="HAMAP" id="MF_01678">
    <property type="entry name" value="Salvage_MtnA"/>
    <property type="match status" value="1"/>
</dbReference>
<dbReference type="InterPro" id="IPR000649">
    <property type="entry name" value="IF-2B-related"/>
</dbReference>
<dbReference type="InterPro" id="IPR005251">
    <property type="entry name" value="IF-M1Pi"/>
</dbReference>
<dbReference type="InterPro" id="IPR042529">
    <property type="entry name" value="IF_2B-like_C"/>
</dbReference>
<dbReference type="InterPro" id="IPR011559">
    <property type="entry name" value="Initiation_fac_2B_a/b/d"/>
</dbReference>
<dbReference type="InterPro" id="IPR027363">
    <property type="entry name" value="M1Pi_N"/>
</dbReference>
<dbReference type="InterPro" id="IPR037171">
    <property type="entry name" value="NagB/RpiA_transferase-like"/>
</dbReference>
<dbReference type="NCBIfam" id="TIGR00524">
    <property type="entry name" value="eIF-2B_rel"/>
    <property type="match status" value="1"/>
</dbReference>
<dbReference type="NCBIfam" id="NF004326">
    <property type="entry name" value="PRK05720.1"/>
    <property type="match status" value="1"/>
</dbReference>
<dbReference type="NCBIfam" id="TIGR00512">
    <property type="entry name" value="salvage_mtnA"/>
    <property type="match status" value="1"/>
</dbReference>
<dbReference type="PANTHER" id="PTHR43475">
    <property type="entry name" value="METHYLTHIORIBOSE-1-PHOSPHATE ISOMERASE"/>
    <property type="match status" value="1"/>
</dbReference>
<dbReference type="PANTHER" id="PTHR43475:SF1">
    <property type="entry name" value="METHYLTHIORIBOSE-1-PHOSPHATE ISOMERASE"/>
    <property type="match status" value="1"/>
</dbReference>
<dbReference type="Pfam" id="PF01008">
    <property type="entry name" value="IF-2B"/>
    <property type="match status" value="1"/>
</dbReference>
<dbReference type="SUPFAM" id="SSF100950">
    <property type="entry name" value="NagB/RpiA/CoA transferase-like"/>
    <property type="match status" value="1"/>
</dbReference>
<protein>
    <recommendedName>
        <fullName evidence="1">Methylthioribose-1-phosphate isomerase</fullName>
        <shortName evidence="1">M1Pi</shortName>
        <shortName evidence="1">MTR-1-P isomerase</shortName>
        <ecNumber evidence="1">5.3.1.23</ecNumber>
    </recommendedName>
    <alternativeName>
        <fullName evidence="1">S-methyl-5-thioribose-1-phosphate isomerase</fullName>
    </alternativeName>
    <alternativeName>
        <fullName evidence="1">Translation initiation factor eIF-2B subunit alpha/beta/delta-like protein</fullName>
    </alternativeName>
</protein>
<keyword id="KW-0028">Amino-acid biosynthesis</keyword>
<keyword id="KW-0963">Cytoplasm</keyword>
<keyword id="KW-0413">Isomerase</keyword>
<keyword id="KW-0486">Methionine biosynthesis</keyword>
<keyword id="KW-0539">Nucleus</keyword>
<keyword id="KW-1185">Reference proteome</keyword>
<accession>P0CI29</accession>
<accession>D1Z8W6</accession>
<accession>F7VVU3</accession>
<gene>
    <name evidence="1" type="primary">MRI1</name>
    <name type="ORF">SMAC_03666.1</name>
</gene>
<sequence>MSALEAIKYSRGKLEVLDQLRLPHEHHYDEVSTSEEAFDCIKTMRVRGAPAIAIVAALAASVELHNGSCTATSPEEAIKYIDGRLDYLYESRPTAVDLGNAVKLLKKTVRDVKTEGLTDAEAKEAIIKAFIEASEEILAKDLKTNKSIGAFGAKWLQEQYKITDDSKITVITHCNTGSLATSGHGTALGIIRTLRDEGLLRHAYCTETRPYNQGSRLTAFELVHEGIPSTLITDSMAAALFRLRKAEENIAAVIVGADRVVRNGDTANKIGTYQLAVLAKHHGIKFMVAAPTTSIDVDTLTGDEIEIEQRKREELTQISGAVINADGSIDTSKSVRVAIADQRIGVWNPGFDVTPNEYIDAIVTEKGTVVKGEDGRFHFEDLMPERFQ</sequence>